<evidence type="ECO:0000250" key="1"/>
<sequence>MSGKMTGIVKWFNADKGFGFITPDDGSKDVFVHFSAIQNDGYKSLDEGQKVSFTIESGAKGPAAGNVTSL</sequence>
<proteinExistence type="inferred from homology"/>
<protein>
    <recommendedName>
        <fullName>Major cold shock protein</fullName>
    </recommendedName>
</protein>
<comment type="subunit">
    <text evidence="1">Homodimer.</text>
</comment>
<comment type="subcellular location">
    <subcellularLocation>
        <location evidence="1">Cytoplasm</location>
    </subcellularLocation>
</comment>
<comment type="induction">
    <text evidence="1">In response to low temperature.</text>
</comment>
<name>CSPA_KLEAK</name>
<feature type="chain" id="PRO_0000100303" description="Major cold shock protein">
    <location>
        <begin position="1"/>
        <end position="70"/>
    </location>
</feature>
<feature type="domain" description="CSD">
    <location>
        <begin position="4"/>
        <end position="69"/>
    </location>
</feature>
<keyword id="KW-0010">Activator</keyword>
<keyword id="KW-0963">Cytoplasm</keyword>
<keyword id="KW-0238">DNA-binding</keyword>
<keyword id="KW-1185">Reference proteome</keyword>
<keyword id="KW-0346">Stress response</keyword>
<keyword id="KW-0804">Transcription</keyword>
<keyword id="KW-0805">Transcription regulation</keyword>
<dbReference type="EMBL" id="CP002824">
    <property type="protein sequence ID" value="AEG96140.1"/>
    <property type="molecule type" value="Genomic_DNA"/>
</dbReference>
<dbReference type="EMBL" id="U60034">
    <property type="protein sequence ID" value="AAC80238.1"/>
    <property type="molecule type" value="Genomic_DNA"/>
</dbReference>
<dbReference type="RefSeq" id="WP_000014594.1">
    <property type="nucleotide sequence ID" value="NC_015663.1"/>
</dbReference>
<dbReference type="RefSeq" id="YP_004591419.1">
    <property type="nucleotide sequence ID" value="NC_015663.1"/>
</dbReference>
<dbReference type="SMR" id="Q46664"/>
<dbReference type="GeneID" id="93778287"/>
<dbReference type="KEGG" id="eae:EAE_06080"/>
<dbReference type="PATRIC" id="fig|1028307.3.peg.1212"/>
<dbReference type="eggNOG" id="COG1278">
    <property type="taxonomic scope" value="Bacteria"/>
</dbReference>
<dbReference type="HOGENOM" id="CLU_117621_2_1_6"/>
<dbReference type="OrthoDB" id="9810590at2"/>
<dbReference type="PRO" id="PR:Q46664"/>
<dbReference type="Proteomes" id="UP000008881">
    <property type="component" value="Chromosome"/>
</dbReference>
<dbReference type="GO" id="GO:0005829">
    <property type="term" value="C:cytosol"/>
    <property type="evidence" value="ECO:0007669"/>
    <property type="project" value="UniProtKB-ARBA"/>
</dbReference>
<dbReference type="GO" id="GO:0003677">
    <property type="term" value="F:DNA binding"/>
    <property type="evidence" value="ECO:0007669"/>
    <property type="project" value="UniProtKB-KW"/>
</dbReference>
<dbReference type="CDD" id="cd04458">
    <property type="entry name" value="CSP_CDS"/>
    <property type="match status" value="1"/>
</dbReference>
<dbReference type="FunFam" id="2.40.50.140:FF:000006">
    <property type="entry name" value="Cold shock protein CspC"/>
    <property type="match status" value="1"/>
</dbReference>
<dbReference type="Gene3D" id="2.40.50.140">
    <property type="entry name" value="Nucleic acid-binding proteins"/>
    <property type="match status" value="1"/>
</dbReference>
<dbReference type="InterPro" id="IPR012156">
    <property type="entry name" value="Cold_shock_CspA"/>
</dbReference>
<dbReference type="InterPro" id="IPR050181">
    <property type="entry name" value="Cold_shock_domain"/>
</dbReference>
<dbReference type="InterPro" id="IPR011129">
    <property type="entry name" value="CSD"/>
</dbReference>
<dbReference type="InterPro" id="IPR019844">
    <property type="entry name" value="CSD_CS"/>
</dbReference>
<dbReference type="InterPro" id="IPR002059">
    <property type="entry name" value="CSP_DNA-bd"/>
</dbReference>
<dbReference type="InterPro" id="IPR012340">
    <property type="entry name" value="NA-bd_OB-fold"/>
</dbReference>
<dbReference type="NCBIfam" id="NF007679">
    <property type="entry name" value="PRK10354.1"/>
    <property type="match status" value="1"/>
</dbReference>
<dbReference type="PANTHER" id="PTHR11544">
    <property type="entry name" value="COLD SHOCK DOMAIN CONTAINING PROTEINS"/>
    <property type="match status" value="1"/>
</dbReference>
<dbReference type="Pfam" id="PF00313">
    <property type="entry name" value="CSD"/>
    <property type="match status" value="1"/>
</dbReference>
<dbReference type="PIRSF" id="PIRSF002599">
    <property type="entry name" value="Cold_shock_A"/>
    <property type="match status" value="1"/>
</dbReference>
<dbReference type="PRINTS" id="PR00050">
    <property type="entry name" value="COLDSHOCK"/>
</dbReference>
<dbReference type="SMART" id="SM00357">
    <property type="entry name" value="CSP"/>
    <property type="match status" value="1"/>
</dbReference>
<dbReference type="SUPFAM" id="SSF50249">
    <property type="entry name" value="Nucleic acid-binding proteins"/>
    <property type="match status" value="1"/>
</dbReference>
<dbReference type="PROSITE" id="PS00352">
    <property type="entry name" value="CSD_1"/>
    <property type="match status" value="1"/>
</dbReference>
<dbReference type="PROSITE" id="PS51857">
    <property type="entry name" value="CSD_2"/>
    <property type="match status" value="1"/>
</dbReference>
<accession>Q46664</accession>
<accession>G0E7T1</accession>
<reference key="1">
    <citation type="journal article" date="2012" name="J. Bacteriol.">
        <title>Complete genome sequence of Enterobacter aerogenes KCTC 2190.</title>
        <authorList>
            <person name="Shin S.H."/>
            <person name="Kim S."/>
            <person name="Kim J.Y."/>
            <person name="Lee S."/>
            <person name="Um Y."/>
            <person name="Oh M.K."/>
            <person name="Kim Y.R."/>
            <person name="Lee J."/>
            <person name="Yang K.S."/>
        </authorList>
    </citation>
    <scope>NUCLEOTIDE SEQUENCE [LARGE SCALE GENOMIC DNA]</scope>
    <source>
        <strain>ATCC 13048 / DSM 30053 / CCUG 1429 / JCM 1235 / KCTC 2190 / NBRC 13534 / NCIMB 10102 / NCTC 10006 / CDC 819-56</strain>
    </source>
</reference>
<reference key="2">
    <citation type="journal article" date="1997" name="J. Ind. Microbiol. Biotechnol.">
        <title>Detection and speciation of bacteria through PCR using universal major cold-shock protein primer oligomers.</title>
        <authorList>
            <person name="Francis K.P."/>
            <person name="Stewart G.S.A.B."/>
        </authorList>
    </citation>
    <scope>NUCLEOTIDE SEQUENCE [GENOMIC DNA] OF 15-60</scope>
    <source>
        <strain>ATCC 13048 / DSM 30053 / CCUG 1429 / JCM 1235 / KCTC 2190 / NBRC 13534 / NCIMB 10102 / NCTC 10006 / CDC 819-56</strain>
    </source>
</reference>
<organism>
    <name type="scientific">Klebsiella aerogenes (strain ATCC 13048 / DSM 30053 / CCUG 1429 / JCM 1235 / KCTC 2190 / NBRC 13534 / NCIMB 10102 / NCTC 10006 / CDC 819-56)</name>
    <name type="common">Enterobacter aerogenes</name>
    <dbReference type="NCBI Taxonomy" id="1028307"/>
    <lineage>
        <taxon>Bacteria</taxon>
        <taxon>Pseudomonadati</taxon>
        <taxon>Pseudomonadota</taxon>
        <taxon>Gammaproteobacteria</taxon>
        <taxon>Enterobacterales</taxon>
        <taxon>Enterobacteriaceae</taxon>
        <taxon>Klebsiella/Raoultella group</taxon>
        <taxon>Klebsiella</taxon>
    </lineage>
</organism>
<gene>
    <name type="primary">cspA</name>
    <name type="ordered locus">EAE_06080</name>
</gene>